<keyword id="KW-0221">Differentiation</keyword>
<keyword id="KW-0472">Membrane</keyword>
<keyword id="KW-0597">Phosphoprotein</keyword>
<keyword id="KW-1185">Reference proteome</keyword>
<keyword id="KW-0677">Repeat</keyword>
<proteinExistence type="evidence at protein level"/>
<accession>Q920M7</accession>
<accession>Q3UXZ2</accession>
<protein>
    <recommendedName>
        <fullName>Synaptotagmin-17</fullName>
    </recommendedName>
    <alternativeName>
        <fullName>Protein B/K</fullName>
    </alternativeName>
    <alternativeName>
        <fullName>Synaptotagmin XVII</fullName>
        <shortName>SytXVII</shortName>
    </alternativeName>
</protein>
<reference key="1">
    <citation type="journal article" date="2001" name="Biochem. J.">
        <title>The N-terminal cysteine cluster is essential for membrane targeting of B/K protein.</title>
        <authorList>
            <person name="Fukuda M."/>
            <person name="Mikoshiba K."/>
        </authorList>
    </citation>
    <scope>NUCLEOTIDE SEQUENCE [MRNA]</scope>
    <scope>SUBCELLULAR LOCATION</scope>
    <source>
        <strain>BALB/cJ</strain>
        <tissue>Brain</tissue>
    </source>
</reference>
<reference key="2">
    <citation type="journal article" date="2005" name="Science">
        <title>The transcriptional landscape of the mammalian genome.</title>
        <authorList>
            <person name="Carninci P."/>
            <person name="Kasukawa T."/>
            <person name="Katayama S."/>
            <person name="Gough J."/>
            <person name="Frith M.C."/>
            <person name="Maeda N."/>
            <person name="Oyama R."/>
            <person name="Ravasi T."/>
            <person name="Lenhard B."/>
            <person name="Wells C."/>
            <person name="Kodzius R."/>
            <person name="Shimokawa K."/>
            <person name="Bajic V.B."/>
            <person name="Brenner S.E."/>
            <person name="Batalov S."/>
            <person name="Forrest A.R."/>
            <person name="Zavolan M."/>
            <person name="Davis M.J."/>
            <person name="Wilming L.G."/>
            <person name="Aidinis V."/>
            <person name="Allen J.E."/>
            <person name="Ambesi-Impiombato A."/>
            <person name="Apweiler R."/>
            <person name="Aturaliya R.N."/>
            <person name="Bailey T.L."/>
            <person name="Bansal M."/>
            <person name="Baxter L."/>
            <person name="Beisel K.W."/>
            <person name="Bersano T."/>
            <person name="Bono H."/>
            <person name="Chalk A.M."/>
            <person name="Chiu K.P."/>
            <person name="Choudhary V."/>
            <person name="Christoffels A."/>
            <person name="Clutterbuck D.R."/>
            <person name="Crowe M.L."/>
            <person name="Dalla E."/>
            <person name="Dalrymple B.P."/>
            <person name="de Bono B."/>
            <person name="Della Gatta G."/>
            <person name="di Bernardo D."/>
            <person name="Down T."/>
            <person name="Engstrom P."/>
            <person name="Fagiolini M."/>
            <person name="Faulkner G."/>
            <person name="Fletcher C.F."/>
            <person name="Fukushima T."/>
            <person name="Furuno M."/>
            <person name="Futaki S."/>
            <person name="Gariboldi M."/>
            <person name="Georgii-Hemming P."/>
            <person name="Gingeras T.R."/>
            <person name="Gojobori T."/>
            <person name="Green R.E."/>
            <person name="Gustincich S."/>
            <person name="Harbers M."/>
            <person name="Hayashi Y."/>
            <person name="Hensch T.K."/>
            <person name="Hirokawa N."/>
            <person name="Hill D."/>
            <person name="Huminiecki L."/>
            <person name="Iacono M."/>
            <person name="Ikeo K."/>
            <person name="Iwama A."/>
            <person name="Ishikawa T."/>
            <person name="Jakt M."/>
            <person name="Kanapin A."/>
            <person name="Katoh M."/>
            <person name="Kawasawa Y."/>
            <person name="Kelso J."/>
            <person name="Kitamura H."/>
            <person name="Kitano H."/>
            <person name="Kollias G."/>
            <person name="Krishnan S.P."/>
            <person name="Kruger A."/>
            <person name="Kummerfeld S.K."/>
            <person name="Kurochkin I.V."/>
            <person name="Lareau L.F."/>
            <person name="Lazarevic D."/>
            <person name="Lipovich L."/>
            <person name="Liu J."/>
            <person name="Liuni S."/>
            <person name="McWilliam S."/>
            <person name="Madan Babu M."/>
            <person name="Madera M."/>
            <person name="Marchionni L."/>
            <person name="Matsuda H."/>
            <person name="Matsuzawa S."/>
            <person name="Miki H."/>
            <person name="Mignone F."/>
            <person name="Miyake S."/>
            <person name="Morris K."/>
            <person name="Mottagui-Tabar S."/>
            <person name="Mulder N."/>
            <person name="Nakano N."/>
            <person name="Nakauchi H."/>
            <person name="Ng P."/>
            <person name="Nilsson R."/>
            <person name="Nishiguchi S."/>
            <person name="Nishikawa S."/>
            <person name="Nori F."/>
            <person name="Ohara O."/>
            <person name="Okazaki Y."/>
            <person name="Orlando V."/>
            <person name="Pang K.C."/>
            <person name="Pavan W.J."/>
            <person name="Pavesi G."/>
            <person name="Pesole G."/>
            <person name="Petrovsky N."/>
            <person name="Piazza S."/>
            <person name="Reed J."/>
            <person name="Reid J.F."/>
            <person name="Ring B.Z."/>
            <person name="Ringwald M."/>
            <person name="Rost B."/>
            <person name="Ruan Y."/>
            <person name="Salzberg S.L."/>
            <person name="Sandelin A."/>
            <person name="Schneider C."/>
            <person name="Schoenbach C."/>
            <person name="Sekiguchi K."/>
            <person name="Semple C.A."/>
            <person name="Seno S."/>
            <person name="Sessa L."/>
            <person name="Sheng Y."/>
            <person name="Shibata Y."/>
            <person name="Shimada H."/>
            <person name="Shimada K."/>
            <person name="Silva D."/>
            <person name="Sinclair B."/>
            <person name="Sperling S."/>
            <person name="Stupka E."/>
            <person name="Sugiura K."/>
            <person name="Sultana R."/>
            <person name="Takenaka Y."/>
            <person name="Taki K."/>
            <person name="Tammoja K."/>
            <person name="Tan S.L."/>
            <person name="Tang S."/>
            <person name="Taylor M.S."/>
            <person name="Tegner J."/>
            <person name="Teichmann S.A."/>
            <person name="Ueda H.R."/>
            <person name="van Nimwegen E."/>
            <person name="Verardo R."/>
            <person name="Wei C.L."/>
            <person name="Yagi K."/>
            <person name="Yamanishi H."/>
            <person name="Zabarovsky E."/>
            <person name="Zhu S."/>
            <person name="Zimmer A."/>
            <person name="Hide W."/>
            <person name="Bult C."/>
            <person name="Grimmond S.M."/>
            <person name="Teasdale R.D."/>
            <person name="Liu E.T."/>
            <person name="Brusic V."/>
            <person name="Quackenbush J."/>
            <person name="Wahlestedt C."/>
            <person name="Mattick J.S."/>
            <person name="Hume D.A."/>
            <person name="Kai C."/>
            <person name="Sasaki D."/>
            <person name="Tomaru Y."/>
            <person name="Fukuda S."/>
            <person name="Kanamori-Katayama M."/>
            <person name="Suzuki M."/>
            <person name="Aoki J."/>
            <person name="Arakawa T."/>
            <person name="Iida J."/>
            <person name="Imamura K."/>
            <person name="Itoh M."/>
            <person name="Kato T."/>
            <person name="Kawaji H."/>
            <person name="Kawagashira N."/>
            <person name="Kawashima T."/>
            <person name="Kojima M."/>
            <person name="Kondo S."/>
            <person name="Konno H."/>
            <person name="Nakano K."/>
            <person name="Ninomiya N."/>
            <person name="Nishio T."/>
            <person name="Okada M."/>
            <person name="Plessy C."/>
            <person name="Shibata K."/>
            <person name="Shiraki T."/>
            <person name="Suzuki S."/>
            <person name="Tagami M."/>
            <person name="Waki K."/>
            <person name="Watahiki A."/>
            <person name="Okamura-Oho Y."/>
            <person name="Suzuki H."/>
            <person name="Kawai J."/>
            <person name="Hayashizaki Y."/>
        </authorList>
    </citation>
    <scope>NUCLEOTIDE SEQUENCE [LARGE SCALE MRNA] OF 2-470</scope>
    <source>
        <strain>C57BL/6J</strain>
        <tissue>Olfactory bulb</tissue>
    </source>
</reference>
<reference key="3">
    <citation type="journal article" date="2010" name="Cell">
        <title>A tissue-specific atlas of mouse protein phosphorylation and expression.</title>
        <authorList>
            <person name="Huttlin E.L."/>
            <person name="Jedrychowski M.P."/>
            <person name="Elias J.E."/>
            <person name="Goswami T."/>
            <person name="Rad R."/>
            <person name="Beausoleil S.A."/>
            <person name="Villen J."/>
            <person name="Haas W."/>
            <person name="Sowa M.E."/>
            <person name="Gygi S.P."/>
        </authorList>
    </citation>
    <scope>PHOSPHORYLATION [LARGE SCALE ANALYSIS] AT SER-114 AND SER-115</scope>
    <scope>IDENTIFICATION BY MASS SPECTROMETRY [LARGE SCALE ANALYSIS]</scope>
    <source>
        <tissue>Brain</tissue>
        <tissue>Brown adipose tissue</tissue>
        <tissue>Kidney</tissue>
    </source>
</reference>
<sequence length="470" mass="53293">MLEPLNEGLLSRISDVLLCGWTCQHCCQRCYESSCCQSSEDEVEILGPFPAQTPPWLMASRSNDKDGDSVHTASDVPLTPRTNSPDGRRSSSDTSKSTYSLTRRISSLDSRRPSSPLIDIKPVEFGVLSAKKESIQPSVLRRTYTPDDYFRKFEPRLYSLDSNLDDVDSLTDEEIMSKYQLGMLHFSTQYDLLHNHLTVRVIEARDLPPPISHDGSRQDMAHSNPYVKICLLPDQKNSKQTGVKRKTQKPVFEERYTFEIPFLEAQRRTLLLTVVDFDKFSRHCVIGKVAVPLCEVDLVKGGHWWKALIPSSQNEVELGELLLSLNYLPSAGRLNVDIIRAKQLLQTDVSQGSDPFVKIQLVHGLKLVKTKKTSFLRGTIDPFYNESFSFKVPQEELENASLVFTVFGHNMKSSNDFIGRIVIGQYSSGPSESNHWRRMLNTHRTAVEQWHSLRSRAECDRVSPASLEVT</sequence>
<feature type="chain" id="PRO_0000311937" description="Synaptotagmin-17">
    <location>
        <begin position="1"/>
        <end position="470"/>
    </location>
</feature>
<feature type="domain" description="C2 1" evidence="2">
    <location>
        <begin position="180"/>
        <end position="306"/>
    </location>
</feature>
<feature type="domain" description="C2 2" evidence="2">
    <location>
        <begin position="317"/>
        <end position="451"/>
    </location>
</feature>
<feature type="region of interest" description="Disordered" evidence="3">
    <location>
        <begin position="54"/>
        <end position="112"/>
    </location>
</feature>
<feature type="compositionally biased region" description="Low complexity" evidence="3">
    <location>
        <begin position="92"/>
        <end position="112"/>
    </location>
</feature>
<feature type="modified residue" description="Phosphoserine" evidence="6">
    <location>
        <position position="114"/>
    </location>
</feature>
<feature type="modified residue" description="Phosphoserine" evidence="6">
    <location>
        <position position="115"/>
    </location>
</feature>
<feature type="sequence conflict" description="In Ref. 2; BAE22421." evidence="5" ref="2">
    <original>LEPLNE</original>
    <variation>PPQWPQ</variation>
    <location>
        <begin position="2"/>
        <end position="7"/>
    </location>
</feature>
<gene>
    <name type="primary">Syt17</name>
    <name type="synonym">Bk</name>
</gene>
<evidence type="ECO:0000250" key="1">
    <source>
        <dbReference type="UniProtKB" id="Q9BSW7"/>
    </source>
</evidence>
<evidence type="ECO:0000255" key="2">
    <source>
        <dbReference type="PROSITE-ProRule" id="PRU00041"/>
    </source>
</evidence>
<evidence type="ECO:0000256" key="3">
    <source>
        <dbReference type="SAM" id="MobiDB-lite"/>
    </source>
</evidence>
<evidence type="ECO:0000269" key="4">
    <source>
    </source>
</evidence>
<evidence type="ECO:0000305" key="5"/>
<evidence type="ECO:0007744" key="6">
    <source>
    </source>
</evidence>
<comment type="function">
    <text evidence="1">Plays a role in dendrite formation by melanocytes.</text>
</comment>
<comment type="subcellular location">
    <subcellularLocation>
        <location evidence="4">Membrane</location>
        <topology evidence="4">Peripheral membrane protein</topology>
    </subcellularLocation>
</comment>
<comment type="similarity">
    <text evidence="5">Belongs to the synaptotagmin family.</text>
</comment>
<organism>
    <name type="scientific">Mus musculus</name>
    <name type="common">Mouse</name>
    <dbReference type="NCBI Taxonomy" id="10090"/>
    <lineage>
        <taxon>Eukaryota</taxon>
        <taxon>Metazoa</taxon>
        <taxon>Chordata</taxon>
        <taxon>Craniata</taxon>
        <taxon>Vertebrata</taxon>
        <taxon>Euteleostomi</taxon>
        <taxon>Mammalia</taxon>
        <taxon>Eutheria</taxon>
        <taxon>Euarchontoglires</taxon>
        <taxon>Glires</taxon>
        <taxon>Rodentia</taxon>
        <taxon>Myomorpha</taxon>
        <taxon>Muroidea</taxon>
        <taxon>Muridae</taxon>
        <taxon>Murinae</taxon>
        <taxon>Mus</taxon>
        <taxon>Mus</taxon>
    </lineage>
</organism>
<dbReference type="EMBL" id="AB069667">
    <property type="protein sequence ID" value="BAB69676.1"/>
    <property type="molecule type" value="mRNA"/>
</dbReference>
<dbReference type="EMBL" id="AK135098">
    <property type="protein sequence ID" value="BAE22421.1"/>
    <property type="molecule type" value="mRNA"/>
</dbReference>
<dbReference type="CCDS" id="CCDS40103.1"/>
<dbReference type="RefSeq" id="NP_619590.1">
    <property type="nucleotide sequence ID" value="NM_138649.3"/>
</dbReference>
<dbReference type="SMR" id="Q920M7"/>
<dbReference type="BioGRID" id="225262">
    <property type="interactions" value="3"/>
</dbReference>
<dbReference type="FunCoup" id="Q920M7">
    <property type="interactions" value="142"/>
</dbReference>
<dbReference type="STRING" id="10090.ENSMUSP00000080284"/>
<dbReference type="iPTMnet" id="Q920M7"/>
<dbReference type="PhosphoSitePlus" id="Q920M7"/>
<dbReference type="SwissPalm" id="Q920M7"/>
<dbReference type="PaxDb" id="10090-ENSMUSP00000080284"/>
<dbReference type="ProteomicsDB" id="253444"/>
<dbReference type="Antibodypedia" id="25349">
    <property type="antibodies" value="149 antibodies from 22 providers"/>
</dbReference>
<dbReference type="Ensembl" id="ENSMUST00000081574.8">
    <property type="protein sequence ID" value="ENSMUSP00000080284.5"/>
    <property type="gene ID" value="ENSMUSG00000058420.9"/>
</dbReference>
<dbReference type="GeneID" id="110058"/>
<dbReference type="KEGG" id="mmu:110058"/>
<dbReference type="UCSC" id="uc009jjt.1">
    <property type="organism name" value="mouse"/>
</dbReference>
<dbReference type="AGR" id="MGI:104966"/>
<dbReference type="CTD" id="51760"/>
<dbReference type="MGI" id="MGI:104966">
    <property type="gene designation" value="Syt17"/>
</dbReference>
<dbReference type="VEuPathDB" id="HostDB:ENSMUSG00000058420"/>
<dbReference type="eggNOG" id="KOG1028">
    <property type="taxonomic scope" value="Eukaryota"/>
</dbReference>
<dbReference type="GeneTree" id="ENSGT00940000158939"/>
<dbReference type="HOGENOM" id="CLU_023008_9_0_1"/>
<dbReference type="InParanoid" id="Q920M7"/>
<dbReference type="OMA" id="PESSHWR"/>
<dbReference type="OrthoDB" id="270970at2759"/>
<dbReference type="PhylomeDB" id="Q920M7"/>
<dbReference type="TreeFam" id="TF315600"/>
<dbReference type="BioGRID-ORCS" id="110058">
    <property type="hits" value="2 hits in 76 CRISPR screens"/>
</dbReference>
<dbReference type="PRO" id="PR:Q920M7"/>
<dbReference type="Proteomes" id="UP000000589">
    <property type="component" value="Chromosome 7"/>
</dbReference>
<dbReference type="RNAct" id="Q920M7">
    <property type="molecule type" value="protein"/>
</dbReference>
<dbReference type="Bgee" id="ENSMUSG00000058420">
    <property type="expression patterns" value="Expressed in subiculum and 138 other cell types or tissues"/>
</dbReference>
<dbReference type="ExpressionAtlas" id="Q920M7">
    <property type="expression patterns" value="baseline and differential"/>
</dbReference>
<dbReference type="GO" id="GO:0098978">
    <property type="term" value="C:glutamatergic synapse"/>
    <property type="evidence" value="ECO:0007669"/>
    <property type="project" value="Ensembl"/>
</dbReference>
<dbReference type="GO" id="GO:0016020">
    <property type="term" value="C:membrane"/>
    <property type="evidence" value="ECO:0007669"/>
    <property type="project" value="UniProtKB-SubCell"/>
</dbReference>
<dbReference type="GO" id="GO:0098794">
    <property type="term" value="C:postsynapse"/>
    <property type="evidence" value="ECO:0007669"/>
    <property type="project" value="Ensembl"/>
</dbReference>
<dbReference type="GO" id="GO:0005802">
    <property type="term" value="C:trans-Golgi network"/>
    <property type="evidence" value="ECO:0000314"/>
    <property type="project" value="MGI"/>
</dbReference>
<dbReference type="GO" id="GO:0030154">
    <property type="term" value="P:cell differentiation"/>
    <property type="evidence" value="ECO:0007669"/>
    <property type="project" value="UniProtKB-KW"/>
</dbReference>
<dbReference type="GO" id="GO:1903861">
    <property type="term" value="P:positive regulation of dendrite extension"/>
    <property type="evidence" value="ECO:0007669"/>
    <property type="project" value="Ensembl"/>
</dbReference>
<dbReference type="GO" id="GO:0099149">
    <property type="term" value="P:regulation of postsynaptic neurotransmitter receptor internalization"/>
    <property type="evidence" value="ECO:0007669"/>
    <property type="project" value="Ensembl"/>
</dbReference>
<dbReference type="CDD" id="cd08390">
    <property type="entry name" value="C2A_Synaptotagmin-15-17"/>
    <property type="match status" value="1"/>
</dbReference>
<dbReference type="CDD" id="cd08410">
    <property type="entry name" value="C2B_Synaptotagmin-17"/>
    <property type="match status" value="1"/>
</dbReference>
<dbReference type="FunFam" id="2.60.40.150:FF:000053">
    <property type="entry name" value="synaptotagmin-17 isoform X1"/>
    <property type="match status" value="1"/>
</dbReference>
<dbReference type="FunFam" id="2.60.40.150:FF:000064">
    <property type="entry name" value="synaptotagmin-17 isoform X1"/>
    <property type="match status" value="1"/>
</dbReference>
<dbReference type="Gene3D" id="2.60.40.150">
    <property type="entry name" value="C2 domain"/>
    <property type="match status" value="2"/>
</dbReference>
<dbReference type="InterPro" id="IPR000008">
    <property type="entry name" value="C2_dom"/>
</dbReference>
<dbReference type="InterPro" id="IPR035892">
    <property type="entry name" value="C2_domain_sf"/>
</dbReference>
<dbReference type="InterPro" id="IPR001565">
    <property type="entry name" value="Synaptotagmin"/>
</dbReference>
<dbReference type="InterPro" id="IPR047897">
    <property type="entry name" value="Synaptotagmin-15/17_C2A"/>
</dbReference>
<dbReference type="InterPro" id="IPR014705">
    <property type="entry name" value="Syt17_C2B"/>
</dbReference>
<dbReference type="PANTHER" id="PTHR10024">
    <property type="entry name" value="SYNAPTOTAGMIN"/>
    <property type="match status" value="1"/>
</dbReference>
<dbReference type="PANTHER" id="PTHR10024:SF348">
    <property type="entry name" value="SYNAPTOTAGMIN-17"/>
    <property type="match status" value="1"/>
</dbReference>
<dbReference type="Pfam" id="PF00168">
    <property type="entry name" value="C2"/>
    <property type="match status" value="2"/>
</dbReference>
<dbReference type="PRINTS" id="PR00399">
    <property type="entry name" value="SYNAPTOTAGMN"/>
</dbReference>
<dbReference type="SMART" id="SM00239">
    <property type="entry name" value="C2"/>
    <property type="match status" value="2"/>
</dbReference>
<dbReference type="SUPFAM" id="SSF49562">
    <property type="entry name" value="C2 domain (Calcium/lipid-binding domain, CaLB)"/>
    <property type="match status" value="2"/>
</dbReference>
<dbReference type="PROSITE" id="PS50004">
    <property type="entry name" value="C2"/>
    <property type="match status" value="2"/>
</dbReference>
<name>SYT17_MOUSE</name>